<accession>Q9T9W0</accession>
<evidence type="ECO:0000250" key="1">
    <source>
        <dbReference type="UniProtKB" id="P00846"/>
    </source>
</evidence>
<evidence type="ECO:0000255" key="2"/>
<evidence type="ECO:0000305" key="3"/>
<feature type="chain" id="PRO_0000082148" description="ATP synthase F(0) complex subunit a">
    <location>
        <begin position="1"/>
        <end position="226"/>
    </location>
</feature>
<feature type="transmembrane region" description="Helical" evidence="2">
    <location>
        <begin position="6"/>
        <end position="26"/>
    </location>
</feature>
<feature type="transmembrane region" description="Helical" evidence="2">
    <location>
        <begin position="68"/>
        <end position="88"/>
    </location>
</feature>
<feature type="transmembrane region" description="Helical" evidence="2">
    <location>
        <begin position="97"/>
        <end position="117"/>
    </location>
</feature>
<feature type="transmembrane region" description="Helical" evidence="2">
    <location>
        <begin position="138"/>
        <end position="158"/>
    </location>
</feature>
<feature type="transmembrane region" description="Helical" evidence="2">
    <location>
        <begin position="164"/>
        <end position="184"/>
    </location>
</feature>
<feature type="transmembrane region" description="Helical" evidence="2">
    <location>
        <begin position="189"/>
        <end position="209"/>
    </location>
</feature>
<sequence length="226" mass="24770">MNENLFASFAAPTILGLPAAVLIILFPPLLVPTSKHLINNRLITTQQWLIQLTSKQMMTMHSTKGRTWSLMLVSLIIFITTTNLLGLLPHSFTPTTQLSMNLAMAIPLWAGAVVMGFRFKTKNALAHFLPQGTPTPLIPMLVIIETISLLIQPMALAVRLTANITAGHLLMHLIGSATLALSTINLPYALIIFTILILLTILEIAVALIQAYVFTLLVSLYLHDNT</sequence>
<gene>
    <name evidence="1" type="primary">MT-ATP6</name>
    <name type="synonym">ATP6</name>
    <name type="synonym">ATPASE6</name>
    <name type="synonym">MTATP6</name>
</gene>
<dbReference type="EMBL" id="D38113">
    <property type="protein sequence ID" value="BAA85271.1"/>
    <property type="molecule type" value="Genomic_DNA"/>
</dbReference>
<dbReference type="RefSeq" id="NP_008191.1">
    <property type="nucleotide sequence ID" value="NC_001643.1"/>
</dbReference>
<dbReference type="SMR" id="Q9T9W0"/>
<dbReference type="FunCoup" id="Q9T9W0">
    <property type="interactions" value="401"/>
</dbReference>
<dbReference type="STRING" id="9598.ENSPTRP00000061399"/>
<dbReference type="PaxDb" id="9598-ENSPTRP00000061399"/>
<dbReference type="Ensembl" id="ENSPTRT00000076410.1">
    <property type="protein sequence ID" value="ENSPTRP00000061399.1"/>
    <property type="gene ID" value="ENSPTRG00000042650.1"/>
</dbReference>
<dbReference type="GeneID" id="807859"/>
<dbReference type="KEGG" id="ptr:807859"/>
<dbReference type="CTD" id="4508"/>
<dbReference type="VGNC" id="VGNC:11712">
    <property type="gene designation" value="MT-ATP6"/>
</dbReference>
<dbReference type="eggNOG" id="KOG4665">
    <property type="taxonomic scope" value="Eukaryota"/>
</dbReference>
<dbReference type="GeneTree" id="ENSGT00390000005568"/>
<dbReference type="HOGENOM" id="CLU_041018_0_2_1"/>
<dbReference type="InParanoid" id="Q9T9W0"/>
<dbReference type="OMA" id="FFDQFMS"/>
<dbReference type="Proteomes" id="UP000002277">
    <property type="component" value="Mitochondrion"/>
</dbReference>
<dbReference type="Bgee" id="ENSPTRG00000042650">
    <property type="expression patterns" value="Expressed in superior frontal gyrus and 20 other cell types or tissues"/>
</dbReference>
<dbReference type="GO" id="GO:0005743">
    <property type="term" value="C:mitochondrial inner membrane"/>
    <property type="evidence" value="ECO:0007669"/>
    <property type="project" value="UniProtKB-SubCell"/>
</dbReference>
<dbReference type="GO" id="GO:0045259">
    <property type="term" value="C:proton-transporting ATP synthase complex"/>
    <property type="evidence" value="ECO:0000250"/>
    <property type="project" value="UniProtKB"/>
</dbReference>
<dbReference type="GO" id="GO:0015252">
    <property type="term" value="F:proton channel activity"/>
    <property type="evidence" value="ECO:0000250"/>
    <property type="project" value="UniProtKB"/>
</dbReference>
<dbReference type="GO" id="GO:0046933">
    <property type="term" value="F:proton-transporting ATP synthase activity, rotational mechanism"/>
    <property type="evidence" value="ECO:0007669"/>
    <property type="project" value="Ensembl"/>
</dbReference>
<dbReference type="GO" id="GO:0015986">
    <property type="term" value="P:proton motive force-driven ATP synthesis"/>
    <property type="evidence" value="ECO:0000250"/>
    <property type="project" value="UniProtKB"/>
</dbReference>
<dbReference type="GO" id="GO:0042776">
    <property type="term" value="P:proton motive force-driven mitochondrial ATP synthesis"/>
    <property type="evidence" value="ECO:0007669"/>
    <property type="project" value="Ensembl"/>
</dbReference>
<dbReference type="GO" id="GO:1902600">
    <property type="term" value="P:proton transmembrane transport"/>
    <property type="evidence" value="ECO:0000250"/>
    <property type="project" value="UniProtKB"/>
</dbReference>
<dbReference type="CDD" id="cd00310">
    <property type="entry name" value="ATP-synt_Fo_a_6"/>
    <property type="match status" value="1"/>
</dbReference>
<dbReference type="FunFam" id="1.20.120.220:FF:000004">
    <property type="entry name" value="ATP synthase subunit a"/>
    <property type="match status" value="1"/>
</dbReference>
<dbReference type="Gene3D" id="1.20.120.220">
    <property type="entry name" value="ATP synthase, F0 complex, subunit A"/>
    <property type="match status" value="1"/>
</dbReference>
<dbReference type="InterPro" id="IPR000568">
    <property type="entry name" value="ATP_synth_F0_asu"/>
</dbReference>
<dbReference type="InterPro" id="IPR023011">
    <property type="entry name" value="ATP_synth_F0_asu_AS"/>
</dbReference>
<dbReference type="InterPro" id="IPR045083">
    <property type="entry name" value="ATP_synth_F0_asu_bact/mt"/>
</dbReference>
<dbReference type="InterPro" id="IPR035908">
    <property type="entry name" value="F0_ATP_A_sf"/>
</dbReference>
<dbReference type="NCBIfam" id="TIGR01131">
    <property type="entry name" value="ATP_synt_6_or_A"/>
    <property type="match status" value="1"/>
</dbReference>
<dbReference type="PANTHER" id="PTHR11410">
    <property type="entry name" value="ATP SYNTHASE SUBUNIT A"/>
    <property type="match status" value="1"/>
</dbReference>
<dbReference type="PANTHER" id="PTHR11410:SF0">
    <property type="entry name" value="ATP SYNTHASE SUBUNIT A"/>
    <property type="match status" value="1"/>
</dbReference>
<dbReference type="Pfam" id="PF00119">
    <property type="entry name" value="ATP-synt_A"/>
    <property type="match status" value="1"/>
</dbReference>
<dbReference type="PRINTS" id="PR00123">
    <property type="entry name" value="ATPASEA"/>
</dbReference>
<dbReference type="SUPFAM" id="SSF81336">
    <property type="entry name" value="F1F0 ATP synthase subunit A"/>
    <property type="match status" value="1"/>
</dbReference>
<dbReference type="PROSITE" id="PS00449">
    <property type="entry name" value="ATPASE_A"/>
    <property type="match status" value="1"/>
</dbReference>
<organism>
    <name type="scientific">Pan troglodytes</name>
    <name type="common">Chimpanzee</name>
    <dbReference type="NCBI Taxonomy" id="9598"/>
    <lineage>
        <taxon>Eukaryota</taxon>
        <taxon>Metazoa</taxon>
        <taxon>Chordata</taxon>
        <taxon>Craniata</taxon>
        <taxon>Vertebrata</taxon>
        <taxon>Euteleostomi</taxon>
        <taxon>Mammalia</taxon>
        <taxon>Eutheria</taxon>
        <taxon>Euarchontoglires</taxon>
        <taxon>Primates</taxon>
        <taxon>Haplorrhini</taxon>
        <taxon>Catarrhini</taxon>
        <taxon>Hominidae</taxon>
        <taxon>Pan</taxon>
    </lineage>
</organism>
<protein>
    <recommendedName>
        <fullName evidence="1">ATP synthase F(0) complex subunit a</fullName>
    </recommendedName>
    <alternativeName>
        <fullName>F-ATPase protein 6</fullName>
    </alternativeName>
    <alternativeName>
        <fullName evidence="1">Proton-conducting channel, ATP synthase F(0) complex subunit a</fullName>
    </alternativeName>
</protein>
<name>ATP6_PANTR</name>
<reference key="1">
    <citation type="journal article" date="1995" name="Proc. Natl. Acad. Sci. U.S.A.">
        <title>Recent African origin of modern humans revealed by complete sequences of hominoid mitochondrial DNAs.</title>
        <authorList>
            <person name="Horai S."/>
            <person name="Hayasaka K."/>
            <person name="Kondo R."/>
            <person name="Tsugane K."/>
            <person name="Takahata N."/>
        </authorList>
    </citation>
    <scope>NUCLEOTIDE SEQUENCE [GENOMIC DNA]</scope>
</reference>
<proteinExistence type="inferred from homology"/>
<geneLocation type="mitochondrion"/>
<comment type="function">
    <text evidence="1">Subunit a, of the mitochondrial membrane ATP synthase complex (F(1)F(0) ATP synthase or Complex V) that produces ATP from ADP in the presence of a proton gradient across the membrane which is generated by electron transport complexes of the respiratory chain. ATP synthase complex consist of a soluble F(1) head domain - the catalytic core - and a membrane F(1) domain - the membrane proton channel. These two domains are linked by a central stalk rotating inside the F(1) region and a stationary peripheral stalk. During catalysis, ATP synthesis in the catalytic domain of F(1) is coupled via a rotary mechanism of the central stalk subunits to proton translocation. With the subunit c (ATP5MC1), forms the proton-conducting channel in the F(0) domain, that contains two crucial half-channels (inlet and outlet) that facilitate proton movement from the mitochondrial intermembrane space (IMS) into the matrix. Protons are taken up via the inlet half-channel and released through the outlet half-channel, following a Grotthuss mechanism.</text>
</comment>
<comment type="catalytic activity">
    <reaction evidence="1">
        <text>H(+)(in) = H(+)(out)</text>
        <dbReference type="Rhea" id="RHEA:34979"/>
        <dbReference type="ChEBI" id="CHEBI:15378"/>
    </reaction>
</comment>
<comment type="subunit">
    <text evidence="1">Component of the ATP synthase complex composed at least of ATP5F1A/subunit alpha, ATP5F1B/subunit beta, ATP5MC1/subunit c (homooctomer), MT-ATP6/subunit a, MT-ATP8/subunit 8, ATP5ME/subunit e, ATP5MF/subunit f, ATP5MG/subunit g, ATP5MK/subunit k, ATP5MJ/subunit j, ATP5F1C/subunit gamma, ATP5F1D/subunit delta, ATP5F1E/subunit epsilon, ATP5PF/subunit F6, ATP5PB/subunit b, ATP5PD/subunit d, ATP5PO/subunit OSCP. ATP synthase complex consists of a soluble F(1) head domain (subunits alpha(3) and beta(3)) - the catalytic core - and a membrane F(0) domain - the membrane proton channel (subunits c, a, 8, e, f, g, k and j). These two domains are linked by a central stalk (subunits gamma, delta, and epsilon) rotating inside the F1 region and a stationary peripheral stalk (subunits F6, b, d, and OSCP). Interacts with DNAJC30; interaction is direct.</text>
</comment>
<comment type="subcellular location">
    <subcellularLocation>
        <location>Mitochondrion inner membrane</location>
        <topology>Multi-pass membrane protein</topology>
    </subcellularLocation>
</comment>
<comment type="similarity">
    <text evidence="3">Belongs to the ATPase A chain family.</text>
</comment>
<keyword id="KW-0066">ATP synthesis</keyword>
<keyword id="KW-0138">CF(0)</keyword>
<keyword id="KW-0375">Hydrogen ion transport</keyword>
<keyword id="KW-0406">Ion transport</keyword>
<keyword id="KW-0472">Membrane</keyword>
<keyword id="KW-0496">Mitochondrion</keyword>
<keyword id="KW-0999">Mitochondrion inner membrane</keyword>
<keyword id="KW-1185">Reference proteome</keyword>
<keyword id="KW-0812">Transmembrane</keyword>
<keyword id="KW-1133">Transmembrane helix</keyword>
<keyword id="KW-0813">Transport</keyword>